<gene>
    <name evidence="1" type="primary">rpiA</name>
    <name type="ordered locus">PLES_03271</name>
</gene>
<sequence length="223" mass="23721">MNQDQLKQAVAQAAVDHILPHLDSKSIVGVGTGSTANFFIDALARHKAEFDGAVASSEATAKRLKEHGIPVYELNTVSELEFYVDGADESNERLELIKGGGAALTREKIVAAVAKTFICIADASKLVPILGQFPLPVEVIPMARSHVARQLVKLGGDPVYREGVLTDNGNIILDVHNLRIDSPVELEEKINAIVGVVTNGLFAARPADLLLLGTADGVKTLKA</sequence>
<name>RPIA_PSEA8</name>
<protein>
    <recommendedName>
        <fullName evidence="1">Ribose-5-phosphate isomerase A</fullName>
        <ecNumber evidence="1">5.3.1.6</ecNumber>
    </recommendedName>
    <alternativeName>
        <fullName evidence="1">Phosphoriboisomerase A</fullName>
        <shortName evidence="1">PRI</shortName>
    </alternativeName>
</protein>
<proteinExistence type="inferred from homology"/>
<reference key="1">
    <citation type="journal article" date="2009" name="Genome Res.">
        <title>Newly introduced genomic prophage islands are critical determinants of in vivo competitiveness in the Liverpool epidemic strain of Pseudomonas aeruginosa.</title>
        <authorList>
            <person name="Winstanley C."/>
            <person name="Langille M.G.I."/>
            <person name="Fothergill J.L."/>
            <person name="Kukavica-Ibrulj I."/>
            <person name="Paradis-Bleau C."/>
            <person name="Sanschagrin F."/>
            <person name="Thomson N.R."/>
            <person name="Winsor G.L."/>
            <person name="Quail M.A."/>
            <person name="Lennard N."/>
            <person name="Bignell A."/>
            <person name="Clarke L."/>
            <person name="Seeger K."/>
            <person name="Saunders D."/>
            <person name="Harris D."/>
            <person name="Parkhill J."/>
            <person name="Hancock R.E.W."/>
            <person name="Brinkman F.S.L."/>
            <person name="Levesque R.C."/>
        </authorList>
    </citation>
    <scope>NUCLEOTIDE SEQUENCE [LARGE SCALE GENOMIC DNA]</scope>
    <source>
        <strain>LESB58</strain>
    </source>
</reference>
<dbReference type="EC" id="5.3.1.6" evidence="1"/>
<dbReference type="EMBL" id="FM209186">
    <property type="protein sequence ID" value="CAW25054.1"/>
    <property type="molecule type" value="Genomic_DNA"/>
</dbReference>
<dbReference type="RefSeq" id="WP_003084386.1">
    <property type="nucleotide sequence ID" value="NC_011770.1"/>
</dbReference>
<dbReference type="SMR" id="B7V2P3"/>
<dbReference type="KEGG" id="pag:PLES_03271"/>
<dbReference type="HOGENOM" id="CLU_056590_1_1_6"/>
<dbReference type="UniPathway" id="UPA00115">
    <property type="reaction ID" value="UER00412"/>
</dbReference>
<dbReference type="GO" id="GO:0005829">
    <property type="term" value="C:cytosol"/>
    <property type="evidence" value="ECO:0007669"/>
    <property type="project" value="TreeGrafter"/>
</dbReference>
<dbReference type="GO" id="GO:0004751">
    <property type="term" value="F:ribose-5-phosphate isomerase activity"/>
    <property type="evidence" value="ECO:0007669"/>
    <property type="project" value="UniProtKB-UniRule"/>
</dbReference>
<dbReference type="GO" id="GO:0006014">
    <property type="term" value="P:D-ribose metabolic process"/>
    <property type="evidence" value="ECO:0007669"/>
    <property type="project" value="TreeGrafter"/>
</dbReference>
<dbReference type="GO" id="GO:0009052">
    <property type="term" value="P:pentose-phosphate shunt, non-oxidative branch"/>
    <property type="evidence" value="ECO:0007669"/>
    <property type="project" value="UniProtKB-UniRule"/>
</dbReference>
<dbReference type="CDD" id="cd01398">
    <property type="entry name" value="RPI_A"/>
    <property type="match status" value="1"/>
</dbReference>
<dbReference type="FunFam" id="3.30.70.260:FF:000004">
    <property type="entry name" value="Ribose-5-phosphate isomerase A"/>
    <property type="match status" value="1"/>
</dbReference>
<dbReference type="FunFam" id="3.40.50.1360:FF:000001">
    <property type="entry name" value="Ribose-5-phosphate isomerase A"/>
    <property type="match status" value="1"/>
</dbReference>
<dbReference type="Gene3D" id="3.30.70.260">
    <property type="match status" value="1"/>
</dbReference>
<dbReference type="Gene3D" id="3.40.50.1360">
    <property type="match status" value="1"/>
</dbReference>
<dbReference type="HAMAP" id="MF_00170">
    <property type="entry name" value="Rib_5P_isom_A"/>
    <property type="match status" value="1"/>
</dbReference>
<dbReference type="InterPro" id="IPR037171">
    <property type="entry name" value="NagB/RpiA_transferase-like"/>
</dbReference>
<dbReference type="InterPro" id="IPR020672">
    <property type="entry name" value="Ribose5P_isomerase_typA_subgr"/>
</dbReference>
<dbReference type="InterPro" id="IPR004788">
    <property type="entry name" value="Ribose5P_isomerase_type_A"/>
</dbReference>
<dbReference type="NCBIfam" id="NF001924">
    <property type="entry name" value="PRK00702.1"/>
    <property type="match status" value="1"/>
</dbReference>
<dbReference type="NCBIfam" id="TIGR00021">
    <property type="entry name" value="rpiA"/>
    <property type="match status" value="1"/>
</dbReference>
<dbReference type="PANTHER" id="PTHR11934">
    <property type="entry name" value="RIBOSE-5-PHOSPHATE ISOMERASE"/>
    <property type="match status" value="1"/>
</dbReference>
<dbReference type="PANTHER" id="PTHR11934:SF0">
    <property type="entry name" value="RIBOSE-5-PHOSPHATE ISOMERASE"/>
    <property type="match status" value="1"/>
</dbReference>
<dbReference type="Pfam" id="PF06026">
    <property type="entry name" value="Rib_5-P_isom_A"/>
    <property type="match status" value="1"/>
</dbReference>
<dbReference type="SUPFAM" id="SSF75445">
    <property type="entry name" value="D-ribose-5-phosphate isomerase (RpiA), lid domain"/>
    <property type="match status" value="1"/>
</dbReference>
<dbReference type="SUPFAM" id="SSF100950">
    <property type="entry name" value="NagB/RpiA/CoA transferase-like"/>
    <property type="match status" value="1"/>
</dbReference>
<organism>
    <name type="scientific">Pseudomonas aeruginosa (strain LESB58)</name>
    <dbReference type="NCBI Taxonomy" id="557722"/>
    <lineage>
        <taxon>Bacteria</taxon>
        <taxon>Pseudomonadati</taxon>
        <taxon>Pseudomonadota</taxon>
        <taxon>Gammaproteobacteria</taxon>
        <taxon>Pseudomonadales</taxon>
        <taxon>Pseudomonadaceae</taxon>
        <taxon>Pseudomonas</taxon>
    </lineage>
</organism>
<feature type="chain" id="PRO_1000194716" description="Ribose-5-phosphate isomerase A">
    <location>
        <begin position="1"/>
        <end position="223"/>
    </location>
</feature>
<feature type="active site" description="Proton acceptor" evidence="1">
    <location>
        <position position="107"/>
    </location>
</feature>
<feature type="binding site" evidence="1">
    <location>
        <begin position="32"/>
        <end position="35"/>
    </location>
    <ligand>
        <name>substrate</name>
    </ligand>
</feature>
<feature type="binding site" evidence="1">
    <location>
        <begin position="85"/>
        <end position="88"/>
    </location>
    <ligand>
        <name>substrate</name>
    </ligand>
</feature>
<feature type="binding site" evidence="1">
    <location>
        <begin position="98"/>
        <end position="101"/>
    </location>
    <ligand>
        <name>substrate</name>
    </ligand>
</feature>
<feature type="binding site" evidence="1">
    <location>
        <position position="125"/>
    </location>
    <ligand>
        <name>substrate</name>
    </ligand>
</feature>
<accession>B7V2P3</accession>
<evidence type="ECO:0000255" key="1">
    <source>
        <dbReference type="HAMAP-Rule" id="MF_00170"/>
    </source>
</evidence>
<comment type="function">
    <text evidence="1">Catalyzes the reversible conversion of ribose-5-phosphate to ribulose 5-phosphate.</text>
</comment>
<comment type="catalytic activity">
    <reaction evidence="1">
        <text>aldehydo-D-ribose 5-phosphate = D-ribulose 5-phosphate</text>
        <dbReference type="Rhea" id="RHEA:14657"/>
        <dbReference type="ChEBI" id="CHEBI:58121"/>
        <dbReference type="ChEBI" id="CHEBI:58273"/>
        <dbReference type="EC" id="5.3.1.6"/>
    </reaction>
</comment>
<comment type="pathway">
    <text evidence="1">Carbohydrate degradation; pentose phosphate pathway; D-ribose 5-phosphate from D-ribulose 5-phosphate (non-oxidative stage): step 1/1.</text>
</comment>
<comment type="subunit">
    <text evidence="1">Homodimer.</text>
</comment>
<comment type="similarity">
    <text evidence="1">Belongs to the ribose 5-phosphate isomerase family.</text>
</comment>
<keyword id="KW-0413">Isomerase</keyword>